<feature type="chain" id="PRO_0000221098" description="3-galactosyl-N-acetylglucosaminide 4-alpha-L-fucosyltransferase FUT3">
    <location>
        <begin position="1"/>
        <end position="372"/>
    </location>
</feature>
<feature type="topological domain" description="Cytoplasmic" evidence="2">
    <location>
        <begin position="1"/>
        <end position="15"/>
    </location>
</feature>
<feature type="transmembrane region" description="Helical; Signal-anchor for type II membrane protein" evidence="1 2">
    <location>
        <begin position="16"/>
        <end position="34"/>
    </location>
</feature>
<feature type="topological domain" description="Lumenal" evidence="2">
    <location>
        <begin position="35"/>
        <end position="372"/>
    </location>
</feature>
<feature type="region of interest" description="Disordered" evidence="3">
    <location>
        <begin position="40"/>
        <end position="68"/>
    </location>
</feature>
<feature type="glycosylation site" description="N-linked (GlcNAc...) asparagine" evidence="2">
    <location>
        <position position="165"/>
    </location>
</feature>
<feature type="glycosylation site" description="N-linked (GlcNAc...) asparagine" evidence="2">
    <location>
        <position position="196"/>
    </location>
</feature>
<sequence>MDPLGAAKTQWPWRRCLAALLFQLLVAVCFFSYLRVSRDDATGSPRPGLMAVEPVTGAPGGSSRQDTTPTRHTLLILLWTWPFHIPVALSRCSEMAPGTADCHITADRKVYPQADAVIVHHWDIMSNPKSRLPPSPRPQGQRWIWFSLEPPPNCQHLEALDGYFNLTMSYRSDSDIFTPYGWLEPWSGQPAHPPLNLSAKTELVAWAVSNWKPDSARVHYYQSLQAHLKVDVYGRSHKPLPKGTMMETLSRYKFYLAFENSLHPDYITEKLWRNALEAWAVPVVLGPSRSNYERFLPPDPFIHVDDFQSPKDLARYLQELDKDHARYLSYFRWRETLQPRSFSWALDFCKACWKLQQESRYQMVRSIAAWFT</sequence>
<gene>
    <name evidence="1" type="primary">FUT3</name>
</gene>
<organism>
    <name type="scientific">Pongo pygmaeus</name>
    <name type="common">Bornean orangutan</name>
    <dbReference type="NCBI Taxonomy" id="9600"/>
    <lineage>
        <taxon>Eukaryota</taxon>
        <taxon>Metazoa</taxon>
        <taxon>Chordata</taxon>
        <taxon>Craniata</taxon>
        <taxon>Vertebrata</taxon>
        <taxon>Euteleostomi</taxon>
        <taxon>Mammalia</taxon>
        <taxon>Eutheria</taxon>
        <taxon>Euarchontoglires</taxon>
        <taxon>Primates</taxon>
        <taxon>Haplorrhini</taxon>
        <taxon>Catarrhini</taxon>
        <taxon>Hominidae</taxon>
        <taxon>Pongo</taxon>
    </lineage>
</organism>
<comment type="function">
    <text evidence="1">Catalyzes the transfer of L-fucose, from a guanosine diphosphate-beta-L-fucose, to both the subterminal N-acetyl glucosamine (GlcNAc) of type 1 chain (beta-D-Gal-(1-&gt;3)-beta-D-GlcNAc) glycolipids and oligosaccharides via an alpha(1,4) linkage, and the subterminal glucose (Glc) or GlcNAc of type 2 chain (beta-D-Gal-(1-&gt;4)-beta-D-GlcNAc) oligosaccharides via an alpha(1,3) linkage, independently of the presence of terminal alpha-L-fucosyl-(1,2) moieties on the terminal galactose of these acceptors and participates in the blood groups Lewis determination and expression of Lewis a (Le(a)), lewis b (Le(b)), Lewis x/SSEA-1 (Le(x)) and lewis y (Le(y)) antigens. Also catalyzes the transfer of L-fucose to subterminal GlcNAc of sialyl- and disialyl-lactotetraosylceramide to produce sialyl Lewis a (sLe(a)) and disialyl Lewis a via an alpha(1,4) linkage and therefore may regulate cell surface sialyl Lewis a expression and consequently regulates adhesive properties to E-selectin, cell proliferation and migration. Catalyzes the transfer of an L-fucose to 3'-sialyl-N-acetyllactosamine by an alpha(1,3) linkage, which allows the formation of sialyl-Lewis x structure and therefore may regulate the sialyl-Lewis x surface antigen expression and consequently adhesive properties to E-selectin. Prefers type 1 chain over type 2 acceptors. Type 1 tetrasaccharide is a better acceptor than type 1 disaccharide suggesting that a beta anomeric configuration of GlcNAc in the substrate is preferred. Lewis-positive (Le(+)) individuals have an active enzyme while Lewis-negative (Le(-)) individuals have an inactive enzyme.</text>
</comment>
<comment type="catalytic activity">
    <reaction evidence="1">
        <text>a beta-D-galactosyl-(1-&gt;3)-N-acetyl-beta-D-glucosaminyl derivative + GDP-beta-L-fucose = a beta-D-galactosyl-(1-&gt;3)-[alpha-L-fucosyl-(1-&gt;4)]-N-acetyl-beta-D-glucosaminyl derivative + GDP + H(+)</text>
        <dbReference type="Rhea" id="RHEA:23628"/>
        <dbReference type="ChEBI" id="CHEBI:15378"/>
        <dbReference type="ChEBI" id="CHEBI:57273"/>
        <dbReference type="ChEBI" id="CHEBI:58189"/>
        <dbReference type="ChEBI" id="CHEBI:133506"/>
        <dbReference type="ChEBI" id="CHEBI:140304"/>
        <dbReference type="EC" id="2.4.1.65"/>
    </reaction>
    <physiologicalReaction direction="left-to-right" evidence="1">
        <dbReference type="Rhea" id="RHEA:23629"/>
    </physiologicalReaction>
</comment>
<comment type="catalytic activity">
    <reaction evidence="1">
        <text>an N-acetyl-alpha-neuraminyl-(2-&gt;3)-beta-D-galactosyl-(1-&gt;4)-N-acetyl-beta-D-glucosaminyl derivative + GDP-beta-L-fucose = an alpha-Neu5Ac-(2-&gt;3)-beta-D-Gal-(1-&gt;4)-[alpha-L-Fuc-(1-&gt;3)]-beta-D-GlcNAc derivative + GDP + H(+)</text>
        <dbReference type="Rhea" id="RHEA:56076"/>
        <dbReference type="ChEBI" id="CHEBI:15378"/>
        <dbReference type="ChEBI" id="CHEBI:57273"/>
        <dbReference type="ChEBI" id="CHEBI:58189"/>
        <dbReference type="ChEBI" id="CHEBI:136545"/>
        <dbReference type="ChEBI" id="CHEBI:139509"/>
    </reaction>
    <physiologicalReaction direction="left-to-right" evidence="1">
        <dbReference type="Rhea" id="RHEA:56077"/>
    </physiologicalReaction>
</comment>
<comment type="catalytic activity">
    <reaction evidence="1">
        <text>a beta-D-galactosyl-(1-&gt;4)-N-acetyl-beta-D-glucosaminyl derivative + GDP-beta-L-fucose = a beta-D-galactosyl-(1-&gt;4)-[alpha-L-fucosyl-(1-&gt;3)]-N-acetyl-beta-D-glucosaminyl derivative + GDP + H(+)</text>
        <dbReference type="Rhea" id="RHEA:14257"/>
        <dbReference type="ChEBI" id="CHEBI:15378"/>
        <dbReference type="ChEBI" id="CHEBI:57273"/>
        <dbReference type="ChEBI" id="CHEBI:58189"/>
        <dbReference type="ChEBI" id="CHEBI:133507"/>
        <dbReference type="ChEBI" id="CHEBI:137941"/>
        <dbReference type="EC" id="2.4.1.152"/>
    </reaction>
    <physiologicalReaction direction="left-to-right" evidence="1">
        <dbReference type="Rhea" id="RHEA:14258"/>
    </physiologicalReaction>
</comment>
<comment type="catalytic activity">
    <reaction evidence="1">
        <text>an alpha-Neu5Ac-(2-&gt;3)-beta-D-Gal-(1-&gt;4)-beta-D-GlcNAc-(1-&gt;3)-beta-D-Gal-(1-&gt;4)-[alpha-L-Fuc-(1-&gt;3)]-beta-D-GlcNAc derivative + GDP-beta-L-fucose = an alpha-Neu5Ac-(2-&gt;3)-beta-D-Gal-(1-&gt;4)-[alpha-L-Fuc-(1-&gt;3)]-beta-D-GlcNAc-(1-&gt;3)-beta-D-Gal-(1-&gt;4)-[alpha-L-Fuc-(1-&gt;3)]-beta-D-GlcNAc derivative + GDP + H(+)</text>
        <dbReference type="Rhea" id="RHEA:52864"/>
        <dbReference type="ChEBI" id="CHEBI:15378"/>
        <dbReference type="ChEBI" id="CHEBI:57273"/>
        <dbReference type="ChEBI" id="CHEBI:58189"/>
        <dbReference type="ChEBI" id="CHEBI:145342"/>
        <dbReference type="ChEBI" id="CHEBI:145343"/>
    </reaction>
    <physiologicalReaction direction="left-to-right" evidence="1">
        <dbReference type="Rhea" id="RHEA:52865"/>
    </physiologicalReaction>
</comment>
<comment type="catalytic activity">
    <reaction evidence="1">
        <text>Lc4Cer + GDP-beta-L-fucose = a lactoside III(4)-a-Fuc-Lc4Cer + GDP + H(+)</text>
        <dbReference type="Rhea" id="RHEA:48824"/>
        <dbReference type="ChEBI" id="CHEBI:15378"/>
        <dbReference type="ChEBI" id="CHEBI:57273"/>
        <dbReference type="ChEBI" id="CHEBI:58189"/>
        <dbReference type="ChEBI" id="CHEBI:90800"/>
        <dbReference type="ChEBI" id="CHEBI:90811"/>
    </reaction>
    <physiologicalReaction direction="left-to-right" evidence="1">
        <dbReference type="Rhea" id="RHEA:48825"/>
    </physiologicalReaction>
</comment>
<comment type="catalytic activity">
    <reaction evidence="1">
        <text>a beta-D-Gal-(1-&gt;3)-beta-D-GlcNAc-(1-&gt;3)-beta-D-Gal-(1-&gt;4)-beta-D-Glc-(1&lt;-&gt;1')-Cer(d18:1(4E)) + GDP-beta-L-fucose = a III(4)-a-Fuc-Lc4Cer(d18:1(4E)) + GDP + H(+)</text>
        <dbReference type="Rhea" id="RHEA:48328"/>
        <dbReference type="ChEBI" id="CHEBI:15378"/>
        <dbReference type="ChEBI" id="CHEBI:17292"/>
        <dbReference type="ChEBI" id="CHEBI:57273"/>
        <dbReference type="ChEBI" id="CHEBI:58189"/>
        <dbReference type="ChEBI" id="CHEBI:90292"/>
    </reaction>
    <physiologicalReaction direction="left-to-right" evidence="1">
        <dbReference type="Rhea" id="RHEA:48329"/>
    </physiologicalReaction>
</comment>
<comment type="catalytic activity">
    <reaction evidence="1">
        <text>N-acetyl-alpha-neuraminosyl-(2-&gt;3)-beta-D-galactosyl-(1-&gt;3)-[N-acetyl-alpha-neuraminosyl-(2-&gt;6)]-N-acetyl-beta-D-glucosaminyl-(1-&gt;3)-beta-D-galactosyl-(1-&gt;4)-beta-D-glucosyl-(1&lt;-&gt;1')-N-acyl-sphing-4-enine + GDP-beta-L-fucose = N-acetyl-alpha-neuraminosyl-(2-&gt;3)-beta-D-galactosyl-(1-&gt;3)-alpha-L-fucosyl-(1-&gt;4)-[N-acetyl-alpha-neuraminosyl-(2-&gt;6)-N-acetyl-beta-D-glucosaminyl-(1-&gt;3)]-beta-D-galactosyl-(1-&gt;4)-beta-D-glucosyl-(1&lt;-&gt;1')-N-acyl-sphing-4-enine + GDP + H(+)</text>
        <dbReference type="Rhea" id="RHEA:47892"/>
        <dbReference type="ChEBI" id="CHEBI:15378"/>
        <dbReference type="ChEBI" id="CHEBI:57273"/>
        <dbReference type="ChEBI" id="CHEBI:58189"/>
        <dbReference type="ChEBI" id="CHEBI:88079"/>
        <dbReference type="ChEBI" id="CHEBI:88089"/>
    </reaction>
    <physiologicalReaction direction="left-to-right" evidence="1">
        <dbReference type="Rhea" id="RHEA:47893"/>
    </physiologicalReaction>
</comment>
<comment type="catalytic activity">
    <reaction evidence="1">
        <text>N-acetyl-alpha-neuraminosyl-(2-&gt;3)-beta-D-galactosyl-(1-&gt;3)-N-acetyl-beta-D-glucosaminyl-(1-&gt;3)-beta-D-galactosyl-(1-&gt;4)-beta-D-glucosyl-(1&lt;-&gt;1')-N-acyl-sphing-4-enine + GDP-beta-L-fucose = N-acetyl-alpha-neuraminosyl-(2-&gt;3)-beta-D-galactosyl-(1-&gt;3)-alpha-L-fucosyl-(1-&gt;4)-[N-acetyl-beta-D-glucosaminyl-(1-&gt;3)]-beta-D-galactosyl-(1-&gt;4)-beta-D-glucosyl-(1&lt;-&gt;1')-N-acyl-sphing-4-enine + GDP + H(+)</text>
        <dbReference type="Rhea" id="RHEA:47888"/>
        <dbReference type="ChEBI" id="CHEBI:15378"/>
        <dbReference type="ChEBI" id="CHEBI:57273"/>
        <dbReference type="ChEBI" id="CHEBI:58189"/>
        <dbReference type="ChEBI" id="CHEBI:88073"/>
        <dbReference type="ChEBI" id="CHEBI:88088"/>
    </reaction>
    <physiologicalReaction direction="left-to-right" evidence="1">
        <dbReference type="Rhea" id="RHEA:47889"/>
    </physiologicalReaction>
</comment>
<comment type="catalytic activity">
    <reaction evidence="1">
        <text>beta-D-galactosyl-(1-&gt;3)-N-acetyl-D-glucosamine + GDP-beta-L-fucose = beta-D-galactosyl-(1-&gt;3)-[alpha-L-fucosyl-(1-&gt;4)]-N-acetyl-D-glucosamine + GDP + H(+)</text>
        <dbReference type="Rhea" id="RHEA:62844"/>
        <dbReference type="ChEBI" id="CHEBI:15378"/>
        <dbReference type="ChEBI" id="CHEBI:27707"/>
        <dbReference type="ChEBI" id="CHEBI:57273"/>
        <dbReference type="ChEBI" id="CHEBI:58189"/>
        <dbReference type="ChEBI" id="CHEBI:62265"/>
    </reaction>
    <physiologicalReaction direction="left-to-right" evidence="1">
        <dbReference type="Rhea" id="RHEA:62845"/>
    </physiologicalReaction>
</comment>
<comment type="catalytic activity">
    <reaction evidence="1">
        <text>alpha-L-Fuc-(1-&gt;2)-beta-D-Gal-(1-&gt;3)-D-GlcNAc + GDP-beta-L-fucose = alpha-L-Fuc-(1-&gt;2)-beta-D-Gal-(1-&gt;3)-[alpha-L-Fuc-(1-&gt;4)]-D-GlcNAc + GDP + H(+)</text>
        <dbReference type="Rhea" id="RHEA:62896"/>
        <dbReference type="ChEBI" id="CHEBI:15378"/>
        <dbReference type="ChEBI" id="CHEBI:57273"/>
        <dbReference type="ChEBI" id="CHEBI:58189"/>
        <dbReference type="ChEBI" id="CHEBI:59440"/>
        <dbReference type="ChEBI" id="CHEBI:62259"/>
    </reaction>
    <physiologicalReaction direction="left-to-right" evidence="1">
        <dbReference type="Rhea" id="RHEA:62897"/>
    </physiologicalReaction>
</comment>
<comment type="catalytic activity">
    <reaction evidence="1">
        <text>alpha-L-Fuc-(1-&gt;2)-beta-D-Gal-(1-&gt;4)-D-GlcNAc + GDP-beta-L-fucose = alpha-L-Fuc-(1-&gt;2)-beta-D-Gal-(1-&gt;4)-[alpha-L-Fuc-(1-&gt;3)]-D-GlcNAc + GDP + H(+)</text>
        <dbReference type="Rhea" id="RHEA:62900"/>
        <dbReference type="ChEBI" id="CHEBI:15378"/>
        <dbReference type="ChEBI" id="CHEBI:57273"/>
        <dbReference type="ChEBI" id="CHEBI:58189"/>
        <dbReference type="ChEBI" id="CHEBI:62263"/>
        <dbReference type="ChEBI" id="CHEBI:62507"/>
    </reaction>
    <physiologicalReaction direction="left-to-right" evidence="1">
        <dbReference type="Rhea" id="RHEA:62901"/>
    </physiologicalReaction>
</comment>
<comment type="catalytic activity">
    <reaction evidence="1">
        <text>beta-D-galactosyl-(1-&gt;4)-N-acetyl-D-glucosamine + GDP-beta-L-fucose = beta-D-galactosyl-(1-&gt;4)-[alpha-L-fucosyl-(1-&gt;3)]-N-acetyl-D-glucosamine + GDP + H(+)</text>
        <dbReference type="Rhea" id="RHEA:62824"/>
        <dbReference type="ChEBI" id="CHEBI:15378"/>
        <dbReference type="ChEBI" id="CHEBI:57273"/>
        <dbReference type="ChEBI" id="CHEBI:58189"/>
        <dbReference type="ChEBI" id="CHEBI:60152"/>
        <dbReference type="ChEBI" id="CHEBI:62287"/>
    </reaction>
    <physiologicalReaction direction="left-to-right" evidence="1">
        <dbReference type="Rhea" id="RHEA:62825"/>
    </physiologicalReaction>
</comment>
<comment type="catalytic activity">
    <reaction evidence="1">
        <text>lactose + GDP-beta-L-fucose = beta-D-galactosyl-(1-&gt;4)-[alpha-L-fucosyl-(1-&gt;3)]-D-glucose + GDP + H(+)</text>
        <dbReference type="Rhea" id="RHEA:62888"/>
        <dbReference type="ChEBI" id="CHEBI:15378"/>
        <dbReference type="ChEBI" id="CHEBI:17716"/>
        <dbReference type="ChEBI" id="CHEBI:57273"/>
        <dbReference type="ChEBI" id="CHEBI:58189"/>
        <dbReference type="ChEBI" id="CHEBI:90065"/>
    </reaction>
    <physiologicalReaction direction="left-to-right" evidence="1">
        <dbReference type="Rhea" id="RHEA:62889"/>
    </physiologicalReaction>
</comment>
<comment type="catalytic activity">
    <reaction evidence="1">
        <text>an alpha-Neu5Ac-(2-&gt;3)-beta-D-Gal-(1-&gt;3)-D-GlcNAc derivative + GDP-beta-L-fucose = an alpha-Neu5Ac-(2-&gt;3)-beta-D-Gal-(1-&gt;3)-[alpha-L-Fuc-(1-&gt;4)]-beta-D-GlcNAc derivative + GDP + H(+)</text>
        <dbReference type="Rhea" id="RHEA:62904"/>
        <dbReference type="ChEBI" id="CHEBI:15378"/>
        <dbReference type="ChEBI" id="CHEBI:57273"/>
        <dbReference type="ChEBI" id="CHEBI:58189"/>
        <dbReference type="ChEBI" id="CHEBI:146021"/>
        <dbReference type="ChEBI" id="CHEBI:146022"/>
    </reaction>
    <physiologicalReaction direction="left-to-right" evidence="1">
        <dbReference type="Rhea" id="RHEA:62905"/>
    </physiologicalReaction>
</comment>
<comment type="pathway">
    <text evidence="1">Protein modification; protein glycosylation.</text>
</comment>
<comment type="subcellular location">
    <subcellularLocation>
        <location evidence="1">Golgi apparatus</location>
        <location evidence="1">Golgi stack membrane</location>
        <topology evidence="1">Single-pass type II membrane protein</topology>
    </subcellularLocation>
    <text evidence="1">Membrane-bound form in trans cisternae of Golgi.</text>
</comment>
<comment type="PTM">
    <text evidence="1">Glycosylated.</text>
</comment>
<comment type="similarity">
    <text evidence="5">Belongs to the glycosyltransferase 10 family.</text>
</comment>
<keyword id="KW-0325">Glycoprotein</keyword>
<keyword id="KW-0328">Glycosyltransferase</keyword>
<keyword id="KW-0333">Golgi apparatus</keyword>
<keyword id="KW-0443">Lipid metabolism</keyword>
<keyword id="KW-0472">Membrane</keyword>
<keyword id="KW-0735">Signal-anchor</keyword>
<keyword id="KW-0808">Transferase</keyword>
<keyword id="KW-0812">Transmembrane</keyword>
<keyword id="KW-1133">Transmembrane helix</keyword>
<proteinExistence type="inferred from homology"/>
<accession>Q8HYJ5</accession>
<dbReference type="EC" id="2.4.1.65" evidence="1"/>
<dbReference type="EC" id="2.4.1.152" evidence="1"/>
<dbReference type="EC" id="2.4.1.-" evidence="1"/>
<dbReference type="EMBL" id="AF515438">
    <property type="protein sequence ID" value="AAO15994.1"/>
    <property type="molecule type" value="Genomic_DNA"/>
</dbReference>
<dbReference type="SMR" id="Q8HYJ5"/>
<dbReference type="CAZy" id="GT10">
    <property type="family name" value="Glycosyltransferase Family 10"/>
</dbReference>
<dbReference type="GlyCosmos" id="Q8HYJ5">
    <property type="glycosylation" value="2 sites, No reported glycans"/>
</dbReference>
<dbReference type="BRENDA" id="2.4.1.65">
    <property type="organism ID" value="4967"/>
</dbReference>
<dbReference type="UniPathway" id="UPA00378"/>
<dbReference type="GO" id="GO:0032580">
    <property type="term" value="C:Golgi cisterna membrane"/>
    <property type="evidence" value="ECO:0007669"/>
    <property type="project" value="UniProtKB-SubCell"/>
</dbReference>
<dbReference type="GO" id="GO:0017060">
    <property type="term" value="F:3-galactosyl-N-acetylglucosaminide 4-alpha-L-fucosyltransferase activity"/>
    <property type="evidence" value="ECO:0000250"/>
    <property type="project" value="UniProtKB"/>
</dbReference>
<dbReference type="GO" id="GO:0017083">
    <property type="term" value="F:4-galactosyl-N-acetylglucosaminide 3-alpha-L-fucosyltransferase activity"/>
    <property type="evidence" value="ECO:0000250"/>
    <property type="project" value="UniProtKB"/>
</dbReference>
<dbReference type="GO" id="GO:0036065">
    <property type="term" value="P:fucosylation"/>
    <property type="evidence" value="ECO:0000250"/>
    <property type="project" value="UniProtKB"/>
</dbReference>
<dbReference type="GO" id="GO:0006629">
    <property type="term" value="P:lipid metabolic process"/>
    <property type="evidence" value="ECO:0007669"/>
    <property type="project" value="UniProtKB-KW"/>
</dbReference>
<dbReference type="GO" id="GO:0009311">
    <property type="term" value="P:oligosaccharide metabolic process"/>
    <property type="evidence" value="ECO:0000250"/>
    <property type="project" value="UniProtKB"/>
</dbReference>
<dbReference type="GO" id="GO:0022409">
    <property type="term" value="P:positive regulation of cell-cell adhesion"/>
    <property type="evidence" value="ECO:0000250"/>
    <property type="project" value="UniProtKB"/>
</dbReference>
<dbReference type="GO" id="GO:0006487">
    <property type="term" value="P:protein N-linked glycosylation"/>
    <property type="evidence" value="ECO:0000250"/>
    <property type="project" value="UniProtKB"/>
</dbReference>
<dbReference type="GO" id="GO:0006493">
    <property type="term" value="P:protein O-linked glycosylation"/>
    <property type="evidence" value="ECO:0000250"/>
    <property type="project" value="UniProtKB"/>
</dbReference>
<dbReference type="GO" id="GO:0030334">
    <property type="term" value="P:regulation of cell migration"/>
    <property type="evidence" value="ECO:0000250"/>
    <property type="project" value="UniProtKB"/>
</dbReference>
<dbReference type="GO" id="GO:0042127">
    <property type="term" value="P:regulation of cell population proliferation"/>
    <property type="evidence" value="ECO:0000250"/>
    <property type="project" value="UniProtKB"/>
</dbReference>
<dbReference type="FunFam" id="3.40.50.11660:FF:000001">
    <property type="entry name" value="alpha-(1,3)-fucosyltransferase 9"/>
    <property type="match status" value="1"/>
</dbReference>
<dbReference type="Gene3D" id="3.40.50.11660">
    <property type="entry name" value="Glycosyl transferase family 10, C-terminal domain"/>
    <property type="match status" value="1"/>
</dbReference>
<dbReference type="InterPro" id="IPR055270">
    <property type="entry name" value="Glyco_tran_10_C"/>
</dbReference>
<dbReference type="InterPro" id="IPR031481">
    <property type="entry name" value="Glyco_tran_10_N"/>
</dbReference>
<dbReference type="InterPro" id="IPR001503">
    <property type="entry name" value="Glyco_trans_10"/>
</dbReference>
<dbReference type="InterPro" id="IPR038577">
    <property type="entry name" value="GT10-like_C_sf"/>
</dbReference>
<dbReference type="PANTHER" id="PTHR11929:SF165">
    <property type="entry name" value="3-GALACTOSYL-N-ACETYLGLUCOSAMINIDE 4-ALPHA-L-FUCOSYLTRANSFERASE FUT3"/>
    <property type="match status" value="1"/>
</dbReference>
<dbReference type="PANTHER" id="PTHR11929">
    <property type="entry name" value="ALPHA- 1,3 -FUCOSYLTRANSFERASE"/>
    <property type="match status" value="1"/>
</dbReference>
<dbReference type="Pfam" id="PF17039">
    <property type="entry name" value="Glyco_tran_10_N"/>
    <property type="match status" value="1"/>
</dbReference>
<dbReference type="Pfam" id="PF00852">
    <property type="entry name" value="Glyco_transf_10"/>
    <property type="match status" value="1"/>
</dbReference>
<dbReference type="SUPFAM" id="SSF53756">
    <property type="entry name" value="UDP-Glycosyltransferase/glycogen phosphorylase"/>
    <property type="match status" value="1"/>
</dbReference>
<protein>
    <recommendedName>
        <fullName evidence="1">3-galactosyl-N-acetylglucosaminide 4-alpha-L-fucosyltransferase FUT3</fullName>
        <ecNumber evidence="1">2.4.1.65</ecNumber>
    </recommendedName>
    <alternativeName>
        <fullName>4-galactosyl-N-acetylglucosaminide 3-alpha-L-fucosyltransferase</fullName>
        <ecNumber evidence="1">2.4.1.152</ecNumber>
    </alternativeName>
    <alternativeName>
        <fullName evidence="1">Alpha-3-fucosyltransferase FUT3</fullName>
        <ecNumber evidence="1">2.4.1.-</ecNumber>
    </alternativeName>
    <alternativeName>
        <fullName evidence="4">Alpha-3/4-fucosyltransferase</fullName>
    </alternativeName>
    <alternativeName>
        <fullName>Blood group Lewis alpha-4-fucosyltransferase</fullName>
        <shortName>Lewis FT</shortName>
    </alternativeName>
    <alternativeName>
        <fullName>Fucosyltransferase 3</fullName>
    </alternativeName>
    <alternativeName>
        <fullName>Fucosyltransferase III</fullName>
        <shortName>FucT-III</shortName>
    </alternativeName>
</protein>
<name>FUT3_PONPY</name>
<reference key="1">
    <citation type="journal article" date="2004" name="Glycobiology">
        <title>Structure/function study of Lewis alpha3- and alpha3/4-fucosyltransferases: the alpha1,4 fucosylation requires an aromatic residue in the acceptor-binding domain.</title>
        <authorList>
            <person name="Dupuy F."/>
            <person name="Germot A."/>
            <person name="Julien R."/>
            <person name="Maftah A."/>
        </authorList>
    </citation>
    <scope>NUCLEOTIDE SEQUENCE [GENOMIC DNA]</scope>
</reference>
<evidence type="ECO:0000250" key="1">
    <source>
        <dbReference type="UniProtKB" id="P21217"/>
    </source>
</evidence>
<evidence type="ECO:0000255" key="2"/>
<evidence type="ECO:0000256" key="3">
    <source>
        <dbReference type="SAM" id="MobiDB-lite"/>
    </source>
</evidence>
<evidence type="ECO:0000303" key="4">
    <source>
    </source>
</evidence>
<evidence type="ECO:0000305" key="5"/>